<keyword id="KW-0963">Cytoplasm</keyword>
<keyword id="KW-0269">Exonuclease</keyword>
<keyword id="KW-0378">Hydrolase</keyword>
<keyword id="KW-0479">Metal-binding</keyword>
<keyword id="KW-0540">Nuclease</keyword>
<keyword id="KW-0539">Nucleus</keyword>
<keyword id="KW-1185">Reference proteome</keyword>
<keyword id="KW-0678">Repressor</keyword>
<keyword id="KW-0694">RNA-binding</keyword>
<keyword id="KW-0943">RNA-mediated gene silencing</keyword>
<keyword id="KW-0804">Transcription</keyword>
<keyword id="KW-0805">Transcription regulation</keyword>
<keyword id="KW-0810">Translation regulation</keyword>
<gene>
    <name type="primary">Cnot8</name>
</gene>
<sequence>MPAALVENSQVICEVWASNLEEEMRKIREIVLSYSYIAMDTEFPGVVVRPIGEFRSSIDYQYQLLRCNVDLLKIIQLGLTFTNEKGEYPSGINTWQFNFKFNLTEDMYSQDSIDLLANSGLQFQKHEEEGIDTLHFAELLMTSGVVLCDNVKWLSFHSGYDFGYMVKLLTDSRLPEEEHEFFHILNLFFPSIYDVKYLMKSCKNLKGGLQEVADQLDLQRIGRQHQAGSDSLLTGMAFFRMKELFFEDSIDDAKYCGRLYGLGTGVAQKQNEDVDCAQEKMSILAMINNMQQ</sequence>
<dbReference type="EC" id="3.1.13.4"/>
<dbReference type="EMBL" id="AK007581">
    <property type="protein sequence ID" value="BAB25119.1"/>
    <property type="molecule type" value="mRNA"/>
</dbReference>
<dbReference type="EMBL" id="AK075727">
    <property type="protein sequence ID" value="BAC35913.1"/>
    <property type="molecule type" value="mRNA"/>
</dbReference>
<dbReference type="EMBL" id="AK150757">
    <property type="protein sequence ID" value="BAE29826.1"/>
    <property type="molecule type" value="mRNA"/>
</dbReference>
<dbReference type="EMBL" id="AK153907">
    <property type="protein sequence ID" value="BAE32248.1"/>
    <property type="molecule type" value="mRNA"/>
</dbReference>
<dbReference type="EMBL" id="BC004040">
    <property type="protein sequence ID" value="AAH04040.1"/>
    <property type="molecule type" value="mRNA"/>
</dbReference>
<dbReference type="CCDS" id="CCDS24722.1"/>
<dbReference type="RefSeq" id="NP_001343406.1">
    <property type="nucleotide sequence ID" value="NM_001356477.2"/>
</dbReference>
<dbReference type="RefSeq" id="NP_001350013.1">
    <property type="nucleotide sequence ID" value="NM_001363084.1"/>
</dbReference>
<dbReference type="RefSeq" id="NP_001350014.1">
    <property type="nucleotide sequence ID" value="NM_001363085.1"/>
</dbReference>
<dbReference type="RefSeq" id="NP_001350015.1">
    <property type="nucleotide sequence ID" value="NM_001363086.1"/>
</dbReference>
<dbReference type="RefSeq" id="NP_081225.1">
    <property type="nucleotide sequence ID" value="NM_026949.5"/>
</dbReference>
<dbReference type="RefSeq" id="XP_006534165.1">
    <property type="nucleotide sequence ID" value="XM_006534102.2"/>
</dbReference>
<dbReference type="RefSeq" id="XP_006534166.1">
    <property type="nucleotide sequence ID" value="XM_006534103.3"/>
</dbReference>
<dbReference type="RefSeq" id="XP_006534167.1">
    <property type="nucleotide sequence ID" value="XM_006534104.1"/>
</dbReference>
<dbReference type="RefSeq" id="XP_006534168.1">
    <property type="nucleotide sequence ID" value="XM_006534105.1"/>
</dbReference>
<dbReference type="RefSeq" id="XP_006534169.1">
    <property type="nucleotide sequence ID" value="XM_006534106.3"/>
</dbReference>
<dbReference type="SMR" id="Q9D8X5"/>
<dbReference type="BioGRID" id="213244">
    <property type="interactions" value="4"/>
</dbReference>
<dbReference type="DIP" id="DIP-61988N"/>
<dbReference type="FunCoup" id="Q9D8X5">
    <property type="interactions" value="3485"/>
</dbReference>
<dbReference type="IntAct" id="Q9D8X5">
    <property type="interactions" value="4"/>
</dbReference>
<dbReference type="STRING" id="10090.ENSMUSP00000104471"/>
<dbReference type="iPTMnet" id="Q9D8X5"/>
<dbReference type="PhosphoSitePlus" id="Q9D8X5"/>
<dbReference type="PaxDb" id="10090-ENSMUSP00000104471"/>
<dbReference type="PeptideAtlas" id="Q9D8X5"/>
<dbReference type="ProteomicsDB" id="283654"/>
<dbReference type="Pumba" id="Q9D8X5"/>
<dbReference type="Antibodypedia" id="28328">
    <property type="antibodies" value="274 antibodies from 29 providers"/>
</dbReference>
<dbReference type="DNASU" id="69125"/>
<dbReference type="Ensembl" id="ENSMUST00000020822.12">
    <property type="protein sequence ID" value="ENSMUSP00000020822.6"/>
    <property type="gene ID" value="ENSMUSG00000020515.14"/>
</dbReference>
<dbReference type="Ensembl" id="ENSMUST00000108843.8">
    <property type="protein sequence ID" value="ENSMUSP00000104471.2"/>
    <property type="gene ID" value="ENSMUSG00000020515.14"/>
</dbReference>
<dbReference type="GeneID" id="69125"/>
<dbReference type="KEGG" id="mmu:69125"/>
<dbReference type="UCSC" id="uc007jaj.1">
    <property type="organism name" value="mouse"/>
</dbReference>
<dbReference type="AGR" id="MGI:1916375"/>
<dbReference type="CTD" id="9337"/>
<dbReference type="MGI" id="MGI:1916375">
    <property type="gene designation" value="Cnot8"/>
</dbReference>
<dbReference type="VEuPathDB" id="HostDB:ENSMUSG00000020515"/>
<dbReference type="eggNOG" id="KOG0304">
    <property type="taxonomic scope" value="Eukaryota"/>
</dbReference>
<dbReference type="GeneTree" id="ENSGT00390000000080"/>
<dbReference type="HOGENOM" id="CLU_027974_0_1_1"/>
<dbReference type="InParanoid" id="Q9D8X5"/>
<dbReference type="OMA" id="HIREVWS"/>
<dbReference type="OrthoDB" id="1164111at2759"/>
<dbReference type="PhylomeDB" id="Q9D8X5"/>
<dbReference type="TreeFam" id="TF314185"/>
<dbReference type="Reactome" id="R-MMU-429947">
    <property type="pathway name" value="Deadenylation of mRNA"/>
</dbReference>
<dbReference type="Reactome" id="R-MMU-6804115">
    <property type="pathway name" value="TP53 regulates transcription of additional cell cycle genes whose exact role in the p53 pathway remain uncertain"/>
</dbReference>
<dbReference type="BioGRID-ORCS" id="69125">
    <property type="hits" value="13 hits in 81 CRISPR screens"/>
</dbReference>
<dbReference type="ChiTaRS" id="Cnot8">
    <property type="organism name" value="mouse"/>
</dbReference>
<dbReference type="PRO" id="PR:Q9D8X5"/>
<dbReference type="Proteomes" id="UP000000589">
    <property type="component" value="Chromosome 11"/>
</dbReference>
<dbReference type="RNAct" id="Q9D8X5">
    <property type="molecule type" value="protein"/>
</dbReference>
<dbReference type="Bgee" id="ENSMUSG00000020515">
    <property type="expression patterns" value="Expressed in secondary oocyte and 272 other cell types or tissues"/>
</dbReference>
<dbReference type="ExpressionAtlas" id="Q9D8X5">
    <property type="expression patterns" value="baseline and differential"/>
</dbReference>
<dbReference type="GO" id="GO:0030014">
    <property type="term" value="C:CCR4-NOT complex"/>
    <property type="evidence" value="ECO:0000250"/>
    <property type="project" value="UniProtKB"/>
</dbReference>
<dbReference type="GO" id="GO:0005829">
    <property type="term" value="C:cytosol"/>
    <property type="evidence" value="ECO:0000304"/>
    <property type="project" value="Reactome"/>
</dbReference>
<dbReference type="GO" id="GO:0005634">
    <property type="term" value="C:nucleus"/>
    <property type="evidence" value="ECO:0007669"/>
    <property type="project" value="UniProtKB-SubCell"/>
</dbReference>
<dbReference type="GO" id="GO:0000175">
    <property type="term" value="F:3'-5'-RNA exonuclease activity"/>
    <property type="evidence" value="ECO:0000250"/>
    <property type="project" value="UniProtKB"/>
</dbReference>
<dbReference type="GO" id="GO:0046872">
    <property type="term" value="F:metal ion binding"/>
    <property type="evidence" value="ECO:0007669"/>
    <property type="project" value="UniProtKB-KW"/>
</dbReference>
<dbReference type="GO" id="GO:0004535">
    <property type="term" value="F:poly(A)-specific ribonuclease activity"/>
    <property type="evidence" value="ECO:0000250"/>
    <property type="project" value="UniProtKB"/>
</dbReference>
<dbReference type="GO" id="GO:0003723">
    <property type="term" value="F:RNA binding"/>
    <property type="evidence" value="ECO:0007669"/>
    <property type="project" value="UniProtKB-KW"/>
</dbReference>
<dbReference type="GO" id="GO:0035279">
    <property type="term" value="P:miRNA-mediated gene silencing by mRNA destabilization"/>
    <property type="evidence" value="ECO:0000250"/>
    <property type="project" value="UniProtKB"/>
</dbReference>
<dbReference type="GO" id="GO:0008284">
    <property type="term" value="P:positive regulation of cell population proliferation"/>
    <property type="evidence" value="ECO:0000250"/>
    <property type="project" value="UniProtKB"/>
</dbReference>
<dbReference type="GO" id="GO:0006417">
    <property type="term" value="P:regulation of translation"/>
    <property type="evidence" value="ECO:0007669"/>
    <property type="project" value="UniProtKB-KW"/>
</dbReference>
<dbReference type="FunFam" id="3.30.420.10:FF:000005">
    <property type="entry name" value="CCR4-NOT transcription complex subunit 7"/>
    <property type="match status" value="1"/>
</dbReference>
<dbReference type="Gene3D" id="3.30.420.10">
    <property type="entry name" value="Ribonuclease H-like superfamily/Ribonuclease H"/>
    <property type="match status" value="1"/>
</dbReference>
<dbReference type="InterPro" id="IPR039637">
    <property type="entry name" value="CNOT7/CNOT8/Pop2"/>
</dbReference>
<dbReference type="InterPro" id="IPR006941">
    <property type="entry name" value="RNase_CAF1"/>
</dbReference>
<dbReference type="InterPro" id="IPR012337">
    <property type="entry name" value="RNaseH-like_sf"/>
</dbReference>
<dbReference type="InterPro" id="IPR036397">
    <property type="entry name" value="RNaseH_sf"/>
</dbReference>
<dbReference type="PANTHER" id="PTHR10797">
    <property type="entry name" value="CCR4-NOT TRANSCRIPTION COMPLEX SUBUNIT"/>
    <property type="match status" value="1"/>
</dbReference>
<dbReference type="Pfam" id="PF04857">
    <property type="entry name" value="CAF1"/>
    <property type="match status" value="2"/>
</dbReference>
<dbReference type="SUPFAM" id="SSF53098">
    <property type="entry name" value="Ribonuclease H-like"/>
    <property type="match status" value="1"/>
</dbReference>
<accession>Q9D8X5</accession>
<accession>Q3U532</accession>
<name>CNOT8_MOUSE</name>
<reference key="1">
    <citation type="journal article" date="2005" name="Science">
        <title>The transcriptional landscape of the mammalian genome.</title>
        <authorList>
            <person name="Carninci P."/>
            <person name="Kasukawa T."/>
            <person name="Katayama S."/>
            <person name="Gough J."/>
            <person name="Frith M.C."/>
            <person name="Maeda N."/>
            <person name="Oyama R."/>
            <person name="Ravasi T."/>
            <person name="Lenhard B."/>
            <person name="Wells C."/>
            <person name="Kodzius R."/>
            <person name="Shimokawa K."/>
            <person name="Bajic V.B."/>
            <person name="Brenner S.E."/>
            <person name="Batalov S."/>
            <person name="Forrest A.R."/>
            <person name="Zavolan M."/>
            <person name="Davis M.J."/>
            <person name="Wilming L.G."/>
            <person name="Aidinis V."/>
            <person name="Allen J.E."/>
            <person name="Ambesi-Impiombato A."/>
            <person name="Apweiler R."/>
            <person name="Aturaliya R.N."/>
            <person name="Bailey T.L."/>
            <person name="Bansal M."/>
            <person name="Baxter L."/>
            <person name="Beisel K.W."/>
            <person name="Bersano T."/>
            <person name="Bono H."/>
            <person name="Chalk A.M."/>
            <person name="Chiu K.P."/>
            <person name="Choudhary V."/>
            <person name="Christoffels A."/>
            <person name="Clutterbuck D.R."/>
            <person name="Crowe M.L."/>
            <person name="Dalla E."/>
            <person name="Dalrymple B.P."/>
            <person name="de Bono B."/>
            <person name="Della Gatta G."/>
            <person name="di Bernardo D."/>
            <person name="Down T."/>
            <person name="Engstrom P."/>
            <person name="Fagiolini M."/>
            <person name="Faulkner G."/>
            <person name="Fletcher C.F."/>
            <person name="Fukushima T."/>
            <person name="Furuno M."/>
            <person name="Futaki S."/>
            <person name="Gariboldi M."/>
            <person name="Georgii-Hemming P."/>
            <person name="Gingeras T.R."/>
            <person name="Gojobori T."/>
            <person name="Green R.E."/>
            <person name="Gustincich S."/>
            <person name="Harbers M."/>
            <person name="Hayashi Y."/>
            <person name="Hensch T.K."/>
            <person name="Hirokawa N."/>
            <person name="Hill D."/>
            <person name="Huminiecki L."/>
            <person name="Iacono M."/>
            <person name="Ikeo K."/>
            <person name="Iwama A."/>
            <person name="Ishikawa T."/>
            <person name="Jakt M."/>
            <person name="Kanapin A."/>
            <person name="Katoh M."/>
            <person name="Kawasawa Y."/>
            <person name="Kelso J."/>
            <person name="Kitamura H."/>
            <person name="Kitano H."/>
            <person name="Kollias G."/>
            <person name="Krishnan S.P."/>
            <person name="Kruger A."/>
            <person name="Kummerfeld S.K."/>
            <person name="Kurochkin I.V."/>
            <person name="Lareau L.F."/>
            <person name="Lazarevic D."/>
            <person name="Lipovich L."/>
            <person name="Liu J."/>
            <person name="Liuni S."/>
            <person name="McWilliam S."/>
            <person name="Madan Babu M."/>
            <person name="Madera M."/>
            <person name="Marchionni L."/>
            <person name="Matsuda H."/>
            <person name="Matsuzawa S."/>
            <person name="Miki H."/>
            <person name="Mignone F."/>
            <person name="Miyake S."/>
            <person name="Morris K."/>
            <person name="Mottagui-Tabar S."/>
            <person name="Mulder N."/>
            <person name="Nakano N."/>
            <person name="Nakauchi H."/>
            <person name="Ng P."/>
            <person name="Nilsson R."/>
            <person name="Nishiguchi S."/>
            <person name="Nishikawa S."/>
            <person name="Nori F."/>
            <person name="Ohara O."/>
            <person name="Okazaki Y."/>
            <person name="Orlando V."/>
            <person name="Pang K.C."/>
            <person name="Pavan W.J."/>
            <person name="Pavesi G."/>
            <person name="Pesole G."/>
            <person name="Petrovsky N."/>
            <person name="Piazza S."/>
            <person name="Reed J."/>
            <person name="Reid J.F."/>
            <person name="Ring B.Z."/>
            <person name="Ringwald M."/>
            <person name="Rost B."/>
            <person name="Ruan Y."/>
            <person name="Salzberg S.L."/>
            <person name="Sandelin A."/>
            <person name="Schneider C."/>
            <person name="Schoenbach C."/>
            <person name="Sekiguchi K."/>
            <person name="Semple C.A."/>
            <person name="Seno S."/>
            <person name="Sessa L."/>
            <person name="Sheng Y."/>
            <person name="Shibata Y."/>
            <person name="Shimada H."/>
            <person name="Shimada K."/>
            <person name="Silva D."/>
            <person name="Sinclair B."/>
            <person name="Sperling S."/>
            <person name="Stupka E."/>
            <person name="Sugiura K."/>
            <person name="Sultana R."/>
            <person name="Takenaka Y."/>
            <person name="Taki K."/>
            <person name="Tammoja K."/>
            <person name="Tan S.L."/>
            <person name="Tang S."/>
            <person name="Taylor M.S."/>
            <person name="Tegner J."/>
            <person name="Teichmann S.A."/>
            <person name="Ueda H.R."/>
            <person name="van Nimwegen E."/>
            <person name="Verardo R."/>
            <person name="Wei C.L."/>
            <person name="Yagi K."/>
            <person name="Yamanishi H."/>
            <person name="Zabarovsky E."/>
            <person name="Zhu S."/>
            <person name="Zimmer A."/>
            <person name="Hide W."/>
            <person name="Bult C."/>
            <person name="Grimmond S.M."/>
            <person name="Teasdale R.D."/>
            <person name="Liu E.T."/>
            <person name="Brusic V."/>
            <person name="Quackenbush J."/>
            <person name="Wahlestedt C."/>
            <person name="Mattick J.S."/>
            <person name="Hume D.A."/>
            <person name="Kai C."/>
            <person name="Sasaki D."/>
            <person name="Tomaru Y."/>
            <person name="Fukuda S."/>
            <person name="Kanamori-Katayama M."/>
            <person name="Suzuki M."/>
            <person name="Aoki J."/>
            <person name="Arakawa T."/>
            <person name="Iida J."/>
            <person name="Imamura K."/>
            <person name="Itoh M."/>
            <person name="Kato T."/>
            <person name="Kawaji H."/>
            <person name="Kawagashira N."/>
            <person name="Kawashima T."/>
            <person name="Kojima M."/>
            <person name="Kondo S."/>
            <person name="Konno H."/>
            <person name="Nakano K."/>
            <person name="Ninomiya N."/>
            <person name="Nishio T."/>
            <person name="Okada M."/>
            <person name="Plessy C."/>
            <person name="Shibata K."/>
            <person name="Shiraki T."/>
            <person name="Suzuki S."/>
            <person name="Tagami M."/>
            <person name="Waki K."/>
            <person name="Watahiki A."/>
            <person name="Okamura-Oho Y."/>
            <person name="Suzuki H."/>
            <person name="Kawai J."/>
            <person name="Hayashizaki Y."/>
        </authorList>
    </citation>
    <scope>NUCLEOTIDE SEQUENCE [LARGE SCALE MRNA]</scope>
    <source>
        <strain>C57BL/6J</strain>
        <strain>NOD</strain>
        <tissue>Bone</tissue>
        <tissue>Pancreas</tissue>
        <tissue>Thymus</tissue>
    </source>
</reference>
<reference key="2">
    <citation type="journal article" date="2004" name="Genome Res.">
        <title>The status, quality, and expansion of the NIH full-length cDNA project: the Mammalian Gene Collection (MGC).</title>
        <authorList>
            <consortium name="The MGC Project Team"/>
        </authorList>
    </citation>
    <scope>NUCLEOTIDE SEQUENCE [LARGE SCALE MRNA]</scope>
</reference>
<reference key="3">
    <citation type="journal article" date="2012" name="Stem Cells">
        <title>Cnot1, Cnot2, and Cnot3 maintain mouse and human ESC identity and inhibit extraembryonic differentiation.</title>
        <authorList>
            <person name="Zheng X."/>
            <person name="Dumitru R."/>
            <person name="Lackford B.L."/>
            <person name="Freudenberg J.M."/>
            <person name="Singh A.P."/>
            <person name="Archer T.K."/>
            <person name="Jothi R."/>
            <person name="Hu G."/>
        </authorList>
    </citation>
    <scope>FUNCTION</scope>
    <scope>DEVELOPMENTAL STAGE</scope>
</reference>
<reference key="4">
    <citation type="journal article" date="2016" name="Nat. Struct. Mol. Biol.">
        <title>BTG4 is a meiotic cell cycle-coupled maternal-zygotic-transition licensing factor in oocytes.</title>
        <authorList>
            <person name="Yu C."/>
            <person name="Ji S.Y."/>
            <person name="Sha Q.Q."/>
            <person name="Dang Y."/>
            <person name="Zhou J.J."/>
            <person name="Zhang Y.L."/>
            <person name="Liu Y."/>
            <person name="Wang Z.W."/>
            <person name="Hu B."/>
            <person name="Sun Q.Y."/>
            <person name="Sun S.C."/>
            <person name="Tang F."/>
            <person name="Fan H.Y."/>
        </authorList>
    </citation>
    <scope>INTERACTION WITH BTG4</scope>
</reference>
<proteinExistence type="evidence at protein level"/>
<organism>
    <name type="scientific">Mus musculus</name>
    <name type="common">Mouse</name>
    <dbReference type="NCBI Taxonomy" id="10090"/>
    <lineage>
        <taxon>Eukaryota</taxon>
        <taxon>Metazoa</taxon>
        <taxon>Chordata</taxon>
        <taxon>Craniata</taxon>
        <taxon>Vertebrata</taxon>
        <taxon>Euteleostomi</taxon>
        <taxon>Mammalia</taxon>
        <taxon>Eutheria</taxon>
        <taxon>Euarchontoglires</taxon>
        <taxon>Glires</taxon>
        <taxon>Rodentia</taxon>
        <taxon>Myomorpha</taxon>
        <taxon>Muroidea</taxon>
        <taxon>Muridae</taxon>
        <taxon>Murinae</taxon>
        <taxon>Mus</taxon>
        <taxon>Mus</taxon>
    </lineage>
</organism>
<comment type="function">
    <text evidence="3">Has 3'-5' poly(A) exoribonuclease activity for synthetic poly(A) RNA substrate. Its function seems to be partially redundant with that of CNOT7. Catalytic component of the CCR4-NOT complex which is linked to various cellular processes including bulk mRNA degradation, miRNA-mediated repression, translational repression during translational initiation and general transcription regulation. During miRNA-mediated repression the complex also seems to act as translational repressor during translational initiation. Additional complex functions may be a consequence of its influence on mRNA expression. Associates with members of the BTG family such as TOB1 and BTG2 and is required for their anti-proliferative activity.</text>
</comment>
<comment type="catalytic activity">
    <reaction>
        <text>Exonucleolytic cleavage of poly(A) to 5'-AMP.</text>
        <dbReference type="EC" id="3.1.13.4"/>
    </reaction>
</comment>
<comment type="subunit">
    <text evidence="2 4">Component of the CCR4-NOT complex; distinct complexes seem to exist that differ in the participation of probably mutually exclusive catalytic subunits; the complex contains two deadenylase subunits, CNOT6 or CNOT6L, and CNOT7 or CNOT8. In the complex interacts directly with CNOT1. Interacts with BTG1, BTG2 and TOB1 (By similarity). Interacts with BTG4 (PubMed:27065194).</text>
</comment>
<comment type="interaction">
    <interactant intactId="EBI-16204625">
        <id>Q9D8X5</id>
    </interactant>
    <interactant intactId="EBI-7847081">
        <id>Q04211</id>
        <label>Btg2</label>
    </interactant>
    <organismsDiffer>false</organismsDiffer>
    <experiments>3</experiments>
</comment>
<comment type="subcellular location">
    <subcellularLocation>
        <location evidence="1">Cytoplasm</location>
    </subcellularLocation>
    <subcellularLocation>
        <location evidence="1">Nucleus</location>
    </subcellularLocation>
</comment>
<comment type="developmental stage">
    <text evidence="3">Expressed in embryonic stem (ES) cells.</text>
</comment>
<comment type="similarity">
    <text evidence="5">Belongs to the CAF1 family.</text>
</comment>
<protein>
    <recommendedName>
        <fullName>CCR4-NOT transcription complex subunit 8</fullName>
        <ecNumber>3.1.13.4</ecNumber>
    </recommendedName>
    <alternativeName>
        <fullName>CCR4-associated factor 8</fullName>
    </alternativeName>
</protein>
<evidence type="ECO:0000250" key="1"/>
<evidence type="ECO:0000250" key="2">
    <source>
        <dbReference type="UniProtKB" id="Q9UFF9"/>
    </source>
</evidence>
<evidence type="ECO:0000269" key="3">
    <source>
    </source>
</evidence>
<evidence type="ECO:0000269" key="4">
    <source>
    </source>
</evidence>
<evidence type="ECO:0000305" key="5"/>
<feature type="chain" id="PRO_0000212847" description="CCR4-NOT transcription complex subunit 8">
    <location>
        <begin position="1"/>
        <end position="292"/>
    </location>
</feature>
<feature type="binding site" evidence="1">
    <location>
        <position position="40"/>
    </location>
    <ligand>
        <name>a divalent metal cation</name>
        <dbReference type="ChEBI" id="CHEBI:60240"/>
        <label>1</label>
        <note>catalytic</note>
    </ligand>
</feature>
<feature type="binding site" evidence="1">
    <location>
        <position position="40"/>
    </location>
    <ligand>
        <name>a divalent metal cation</name>
        <dbReference type="ChEBI" id="CHEBI:60240"/>
        <label>2</label>
        <note>catalytic</note>
    </ligand>
</feature>
<feature type="binding site" evidence="1">
    <location>
        <position position="42"/>
    </location>
    <ligand>
        <name>a divalent metal cation</name>
        <dbReference type="ChEBI" id="CHEBI:60240"/>
        <label>2</label>
        <note>catalytic</note>
    </ligand>
</feature>
<feature type="binding site" evidence="1">
    <location>
        <position position="161"/>
    </location>
    <ligand>
        <name>a divalent metal cation</name>
        <dbReference type="ChEBI" id="CHEBI:60240"/>
        <label>1</label>
        <note>catalytic</note>
    </ligand>
</feature>
<feature type="binding site" evidence="1">
    <location>
        <position position="230"/>
    </location>
    <ligand>
        <name>a divalent metal cation</name>
        <dbReference type="ChEBI" id="CHEBI:60240"/>
        <label>2</label>
        <note>catalytic</note>
    </ligand>
</feature>